<organism>
    <name type="scientific">Escherichia coli O9:H4 (strain HS)</name>
    <dbReference type="NCBI Taxonomy" id="331112"/>
    <lineage>
        <taxon>Bacteria</taxon>
        <taxon>Pseudomonadati</taxon>
        <taxon>Pseudomonadota</taxon>
        <taxon>Gammaproteobacteria</taxon>
        <taxon>Enterobacterales</taxon>
        <taxon>Enterobacteriaceae</taxon>
        <taxon>Escherichia</taxon>
    </lineage>
</organism>
<protein>
    <recommendedName>
        <fullName evidence="1">Ribosomal RNA large subunit methyltransferase G</fullName>
        <ecNumber evidence="1">2.1.1.174</ecNumber>
    </recommendedName>
    <alternativeName>
        <fullName evidence="1">23S rRNA m2G1835 methyltransferase</fullName>
    </alternativeName>
    <alternativeName>
        <fullName evidence="1">rRNA (guanine-N(2)-)-methyltransferase RlmG</fullName>
    </alternativeName>
</protein>
<dbReference type="EC" id="2.1.1.174" evidence="1"/>
<dbReference type="EMBL" id="CP000802">
    <property type="protein sequence ID" value="ABV07495.1"/>
    <property type="molecule type" value="Genomic_DNA"/>
</dbReference>
<dbReference type="RefSeq" id="WP_000018663.1">
    <property type="nucleotide sequence ID" value="NC_009800.1"/>
</dbReference>
<dbReference type="SMR" id="A8A4P1"/>
<dbReference type="KEGG" id="ecx:EcHS_A3266"/>
<dbReference type="HOGENOM" id="CLU_040288_4_0_6"/>
<dbReference type="GO" id="GO:0005737">
    <property type="term" value="C:cytoplasm"/>
    <property type="evidence" value="ECO:0007669"/>
    <property type="project" value="UniProtKB-SubCell"/>
</dbReference>
<dbReference type="GO" id="GO:0052916">
    <property type="term" value="F:23S rRNA (guanine(1835)-N(2))-methyltransferase activity"/>
    <property type="evidence" value="ECO:0007669"/>
    <property type="project" value="UniProtKB-EC"/>
</dbReference>
<dbReference type="GO" id="GO:0003676">
    <property type="term" value="F:nucleic acid binding"/>
    <property type="evidence" value="ECO:0007669"/>
    <property type="project" value="InterPro"/>
</dbReference>
<dbReference type="CDD" id="cd02440">
    <property type="entry name" value="AdoMet_MTases"/>
    <property type="match status" value="1"/>
</dbReference>
<dbReference type="FunFam" id="3.40.50.150:FF:000046">
    <property type="entry name" value="Ribosomal RNA large subunit methyltransferase G"/>
    <property type="match status" value="1"/>
</dbReference>
<dbReference type="FunFam" id="3.40.50.150:FF:000047">
    <property type="entry name" value="Ribosomal RNA large subunit methyltransferase G"/>
    <property type="match status" value="1"/>
</dbReference>
<dbReference type="Gene3D" id="3.40.50.150">
    <property type="entry name" value="Vaccinia Virus protein VP39"/>
    <property type="match status" value="2"/>
</dbReference>
<dbReference type="HAMAP" id="MF_01859">
    <property type="entry name" value="23SrRNA_methyltr_G"/>
    <property type="match status" value="1"/>
</dbReference>
<dbReference type="InterPro" id="IPR002052">
    <property type="entry name" value="DNA_methylase_N6_adenine_CS"/>
</dbReference>
<dbReference type="InterPro" id="IPR017237">
    <property type="entry name" value="rRNA_m2G-MeTrfase_RlmG"/>
</dbReference>
<dbReference type="InterPro" id="IPR046977">
    <property type="entry name" value="RsmC/RlmG"/>
</dbReference>
<dbReference type="InterPro" id="IPR029063">
    <property type="entry name" value="SAM-dependent_MTases_sf"/>
</dbReference>
<dbReference type="InterPro" id="IPR007848">
    <property type="entry name" value="Small_mtfrase_dom"/>
</dbReference>
<dbReference type="NCBIfam" id="NF011577">
    <property type="entry name" value="PRK15001.1"/>
    <property type="match status" value="1"/>
</dbReference>
<dbReference type="PANTHER" id="PTHR47816:SF5">
    <property type="entry name" value="RIBOSOMAL RNA LARGE SUBUNIT METHYLTRANSFERASE G"/>
    <property type="match status" value="1"/>
</dbReference>
<dbReference type="PANTHER" id="PTHR47816">
    <property type="entry name" value="RIBOSOMAL RNA SMALL SUBUNIT METHYLTRANSFERASE C"/>
    <property type="match status" value="1"/>
</dbReference>
<dbReference type="Pfam" id="PF05175">
    <property type="entry name" value="MTS"/>
    <property type="match status" value="1"/>
</dbReference>
<dbReference type="PIRSF" id="PIRSF037565">
    <property type="entry name" value="RRNA_m2G_Mtase_RsmD_prd"/>
    <property type="match status" value="1"/>
</dbReference>
<dbReference type="SUPFAM" id="SSF53335">
    <property type="entry name" value="S-adenosyl-L-methionine-dependent methyltransferases"/>
    <property type="match status" value="1"/>
</dbReference>
<feature type="chain" id="PRO_0000366465" description="Ribosomal RNA large subunit methyltransferase G">
    <location>
        <begin position="1"/>
        <end position="378"/>
    </location>
</feature>
<comment type="function">
    <text evidence="1">Specifically methylates the guanine in position 1835 (m2G1835) of 23S rRNA.</text>
</comment>
<comment type="catalytic activity">
    <reaction evidence="1">
        <text>guanosine(1835) in 23S rRNA + S-adenosyl-L-methionine = N(2)-methylguanosine(1835) in 23S rRNA + S-adenosyl-L-homocysteine + H(+)</text>
        <dbReference type="Rhea" id="RHEA:42744"/>
        <dbReference type="Rhea" id="RHEA-COMP:10217"/>
        <dbReference type="Rhea" id="RHEA-COMP:10218"/>
        <dbReference type="ChEBI" id="CHEBI:15378"/>
        <dbReference type="ChEBI" id="CHEBI:57856"/>
        <dbReference type="ChEBI" id="CHEBI:59789"/>
        <dbReference type="ChEBI" id="CHEBI:74269"/>
        <dbReference type="ChEBI" id="CHEBI:74481"/>
        <dbReference type="EC" id="2.1.1.174"/>
    </reaction>
</comment>
<comment type="subcellular location">
    <subcellularLocation>
        <location evidence="1">Cytoplasm</location>
    </subcellularLocation>
</comment>
<comment type="similarity">
    <text evidence="1">Belongs to the methyltransferase superfamily. RlmG family.</text>
</comment>
<proteinExistence type="inferred from homology"/>
<sequence>MSHLDNGFRSLTLQRFPATDDVNPLQAWEAADEYLLQQLDDTEIRGPVLILNDAFGALSCALAEHKPYSIGDSYISELATRENLRLNGIDESSVKFLDSTADYLQQPGVVLIKVPKTLALLEQQLRALRKVVTSDTRIIAGAKARDIHTSTLELFEKVLGPTTTTLAWKKARLINCTFNEPPLADAPQTVSWKLEGTDWTIHNHANVFSRTGLDIGARFFMQHLPENLEGEIVDLGCGNGVIGLTLLDKNPQAKVVFVDESPMAVASSRMNVETNMPEALDRCEFMINNALSGVEPFRFNAVLCNPPFHQQHALTDNVAWEMFHHARRCLKINGELYIVANRHLDYFHKLKKIFGNCTTIATNNKFVVLKTVKLGRRR</sequence>
<keyword id="KW-0963">Cytoplasm</keyword>
<keyword id="KW-0489">Methyltransferase</keyword>
<keyword id="KW-0698">rRNA processing</keyword>
<keyword id="KW-0949">S-adenosyl-L-methionine</keyword>
<keyword id="KW-0808">Transferase</keyword>
<evidence type="ECO:0000255" key="1">
    <source>
        <dbReference type="HAMAP-Rule" id="MF_01859"/>
    </source>
</evidence>
<accession>A8A4P1</accession>
<reference key="1">
    <citation type="journal article" date="2008" name="J. Bacteriol.">
        <title>The pangenome structure of Escherichia coli: comparative genomic analysis of E. coli commensal and pathogenic isolates.</title>
        <authorList>
            <person name="Rasko D.A."/>
            <person name="Rosovitz M.J."/>
            <person name="Myers G.S.A."/>
            <person name="Mongodin E.F."/>
            <person name="Fricke W.F."/>
            <person name="Gajer P."/>
            <person name="Crabtree J."/>
            <person name="Sebaihia M."/>
            <person name="Thomson N.R."/>
            <person name="Chaudhuri R."/>
            <person name="Henderson I.R."/>
            <person name="Sperandio V."/>
            <person name="Ravel J."/>
        </authorList>
    </citation>
    <scope>NUCLEOTIDE SEQUENCE [LARGE SCALE GENOMIC DNA]</scope>
    <source>
        <strain>HS</strain>
    </source>
</reference>
<gene>
    <name evidence="1" type="primary">rlmG</name>
    <name type="ordered locus">EcHS_A3266</name>
</gene>
<name>RLMG_ECOHS</name>